<accession>Q55370</accession>
<evidence type="ECO:0000250" key="1"/>
<evidence type="ECO:0000250" key="2">
    <source>
        <dbReference type="UniProtKB" id="P0A738"/>
    </source>
</evidence>
<evidence type="ECO:0000255" key="3"/>
<evidence type="ECO:0000305" key="4"/>
<gene>
    <name type="primary">moaC/mobA</name>
    <name type="ordered locus">slr0902</name>
</gene>
<reference key="1">
    <citation type="journal article" date="1995" name="DNA Res.">
        <title>Sequence analysis of the genome of the unicellular cyanobacterium Synechocystis sp. strain PCC6803. I. Sequence features in the 1 Mb region from map positions 64% to 92% of the genome.</title>
        <authorList>
            <person name="Kaneko T."/>
            <person name="Tanaka A."/>
            <person name="Sato S."/>
            <person name="Kotani H."/>
            <person name="Sazuka T."/>
            <person name="Miyajima N."/>
            <person name="Sugiura M."/>
            <person name="Tabata S."/>
        </authorList>
    </citation>
    <scope>NUCLEOTIDE SEQUENCE [LARGE SCALE GENOMIC DNA]</scope>
    <source>
        <strain>ATCC 27184 / PCC 6803 / N-1</strain>
    </source>
</reference>
<reference key="2">
    <citation type="journal article" date="1996" name="DNA Res.">
        <title>Sequence analysis of the genome of the unicellular cyanobacterium Synechocystis sp. strain PCC6803. II. Sequence determination of the entire genome and assignment of potential protein-coding regions.</title>
        <authorList>
            <person name="Kaneko T."/>
            <person name="Sato S."/>
            <person name="Kotani H."/>
            <person name="Tanaka A."/>
            <person name="Asamizu E."/>
            <person name="Nakamura Y."/>
            <person name="Miyajima N."/>
            <person name="Hirosawa M."/>
            <person name="Sugiura M."/>
            <person name="Sasamoto S."/>
            <person name="Kimura T."/>
            <person name="Hosouchi T."/>
            <person name="Matsuno A."/>
            <person name="Muraki A."/>
            <person name="Nakazaki N."/>
            <person name="Naruo K."/>
            <person name="Okumura S."/>
            <person name="Shimpo S."/>
            <person name="Takeuchi C."/>
            <person name="Wada T."/>
            <person name="Watanabe A."/>
            <person name="Yamada M."/>
            <person name="Yasuda M."/>
            <person name="Tabata S."/>
        </authorList>
    </citation>
    <scope>NUCLEOTIDE SEQUENCE [LARGE SCALE GENOMIC DNA]</scope>
    <source>
        <strain>ATCC 27184 / PCC 6803 / Kazusa</strain>
    </source>
</reference>
<keyword id="KW-0963">Cytoplasm</keyword>
<keyword id="KW-0342">GTP-binding</keyword>
<keyword id="KW-0456">Lyase</keyword>
<keyword id="KW-0460">Magnesium</keyword>
<keyword id="KW-0479">Metal-binding</keyword>
<keyword id="KW-0501">Molybdenum cofactor biosynthesis</keyword>
<keyword id="KW-0547">Nucleotide-binding</keyword>
<keyword id="KW-1185">Reference proteome</keyword>
<keyword id="KW-0808">Transferase</keyword>
<protein>
    <recommendedName>
        <fullName>Molybdenum cofactor biosynthesis bifunctional protein</fullName>
    </recommendedName>
    <domain>
        <recommendedName>
            <fullName evidence="2">Cyclic pyranopterin monophosphate synthase</fullName>
            <ecNumber evidence="2">4.6.1.17</ecNumber>
        </recommendedName>
        <alternativeName>
            <fullName evidence="2">Molybdenum cofactor biosynthesis protein C</fullName>
        </alternativeName>
    </domain>
    <domain>
        <recommendedName>
            <fullName>Probable molybdenum cofactor guanylyltransferase</fullName>
            <shortName>MoCo guanylyltransferase</shortName>
            <ecNumber>2.7.7.77</ecNumber>
        </recommendedName>
        <alternativeName>
            <fullName>GTP:molybdopterin guanylyltransferase</fullName>
        </alternativeName>
        <alternativeName>
            <fullName>Mo-MPT guanylyltransferase</fullName>
        </alternativeName>
        <alternativeName>
            <fullName>Molybdopterin guanylyltransferase</fullName>
        </alternativeName>
        <alternativeName>
            <fullName>Molybdopterin-guanine dinucleotide synthase</fullName>
            <shortName>MGD synthase</shortName>
        </alternativeName>
    </domain>
</protein>
<dbReference type="EC" id="4.6.1.17" evidence="2"/>
<dbReference type="EC" id="2.7.7.77"/>
<dbReference type="EMBL" id="BA000022">
    <property type="protein sequence ID" value="BAA10452.1"/>
    <property type="molecule type" value="Genomic_DNA"/>
</dbReference>
<dbReference type="PIR" id="S75717">
    <property type="entry name" value="S75717"/>
</dbReference>
<dbReference type="SMR" id="Q55370"/>
<dbReference type="STRING" id="1148.gene:10499953"/>
<dbReference type="PaxDb" id="1148-1001212"/>
<dbReference type="EnsemblBacteria" id="BAA10452">
    <property type="protein sequence ID" value="BAA10452"/>
    <property type="gene ID" value="BAA10452"/>
</dbReference>
<dbReference type="KEGG" id="syn:slr0902"/>
<dbReference type="eggNOG" id="COG0315">
    <property type="taxonomic scope" value="Bacteria"/>
</dbReference>
<dbReference type="eggNOG" id="COG0746">
    <property type="taxonomic scope" value="Bacteria"/>
</dbReference>
<dbReference type="InParanoid" id="Q55370"/>
<dbReference type="PhylomeDB" id="Q55370"/>
<dbReference type="UniPathway" id="UPA00344"/>
<dbReference type="Proteomes" id="UP000001425">
    <property type="component" value="Chromosome"/>
</dbReference>
<dbReference type="GO" id="GO:0005737">
    <property type="term" value="C:cytoplasm"/>
    <property type="evidence" value="ECO:0007669"/>
    <property type="project" value="UniProtKB-SubCell"/>
</dbReference>
<dbReference type="GO" id="GO:0061799">
    <property type="term" value="F:cyclic pyranopterin monophosphate synthase activity"/>
    <property type="evidence" value="ECO:0007669"/>
    <property type="project" value="UniProtKB-EC"/>
</dbReference>
<dbReference type="GO" id="GO:0005525">
    <property type="term" value="F:GTP binding"/>
    <property type="evidence" value="ECO:0007669"/>
    <property type="project" value="UniProtKB-UniRule"/>
</dbReference>
<dbReference type="GO" id="GO:0046872">
    <property type="term" value="F:metal ion binding"/>
    <property type="evidence" value="ECO:0007669"/>
    <property type="project" value="UniProtKB-KW"/>
</dbReference>
<dbReference type="GO" id="GO:0061603">
    <property type="term" value="F:molybdenum cofactor guanylyltransferase activity"/>
    <property type="evidence" value="ECO:0007669"/>
    <property type="project" value="UniProtKB-EC"/>
</dbReference>
<dbReference type="GO" id="GO:0016779">
    <property type="term" value="F:nucleotidyltransferase activity"/>
    <property type="evidence" value="ECO:0000318"/>
    <property type="project" value="GO_Central"/>
</dbReference>
<dbReference type="GO" id="GO:0006777">
    <property type="term" value="P:Mo-molybdopterin cofactor biosynthetic process"/>
    <property type="evidence" value="ECO:0007669"/>
    <property type="project" value="UniProtKB-KW"/>
</dbReference>
<dbReference type="CDD" id="cd01420">
    <property type="entry name" value="MoaC_PE"/>
    <property type="match status" value="1"/>
</dbReference>
<dbReference type="CDD" id="cd02503">
    <property type="entry name" value="MobA"/>
    <property type="match status" value="1"/>
</dbReference>
<dbReference type="Gene3D" id="3.30.70.640">
    <property type="entry name" value="Molybdopterin cofactor biosynthesis C (MoaC) domain"/>
    <property type="match status" value="1"/>
</dbReference>
<dbReference type="Gene3D" id="3.90.550.10">
    <property type="entry name" value="Spore Coat Polysaccharide Biosynthesis Protein SpsA, Chain A"/>
    <property type="match status" value="1"/>
</dbReference>
<dbReference type="HAMAP" id="MF_00316">
    <property type="entry name" value="MobA"/>
    <property type="match status" value="1"/>
</dbReference>
<dbReference type="InterPro" id="IPR023045">
    <property type="entry name" value="MoaC"/>
</dbReference>
<dbReference type="InterPro" id="IPR047594">
    <property type="entry name" value="MoaC_bact/euk"/>
</dbReference>
<dbReference type="InterPro" id="IPR036522">
    <property type="entry name" value="MoaC_sf"/>
</dbReference>
<dbReference type="InterPro" id="IPR025877">
    <property type="entry name" value="MobA-like_NTP_Trfase"/>
</dbReference>
<dbReference type="InterPro" id="IPR013482">
    <property type="entry name" value="Molybde_CF_guanTrfase"/>
</dbReference>
<dbReference type="InterPro" id="IPR002820">
    <property type="entry name" value="Mopterin_CF_biosynth-C_dom"/>
</dbReference>
<dbReference type="InterPro" id="IPR029044">
    <property type="entry name" value="Nucleotide-diphossugar_trans"/>
</dbReference>
<dbReference type="NCBIfam" id="TIGR00581">
    <property type="entry name" value="moaC"/>
    <property type="match status" value="1"/>
</dbReference>
<dbReference type="NCBIfam" id="NF006870">
    <property type="entry name" value="PRK09364.1"/>
    <property type="match status" value="1"/>
</dbReference>
<dbReference type="NCBIfam" id="NF011070">
    <property type="entry name" value="PRK14500.1"/>
    <property type="match status" value="1"/>
</dbReference>
<dbReference type="PANTHER" id="PTHR19136">
    <property type="entry name" value="MOLYBDENUM COFACTOR GUANYLYLTRANSFERASE"/>
    <property type="match status" value="1"/>
</dbReference>
<dbReference type="PANTHER" id="PTHR19136:SF81">
    <property type="entry name" value="MOLYBDENUM COFACTOR GUANYLYLTRANSFERASE"/>
    <property type="match status" value="1"/>
</dbReference>
<dbReference type="Pfam" id="PF01967">
    <property type="entry name" value="MoaC"/>
    <property type="match status" value="1"/>
</dbReference>
<dbReference type="Pfam" id="PF12804">
    <property type="entry name" value="NTP_transf_3"/>
    <property type="match status" value="1"/>
</dbReference>
<dbReference type="SUPFAM" id="SSF55040">
    <property type="entry name" value="Molybdenum cofactor biosynthesis protein C, MoaC"/>
    <property type="match status" value="1"/>
</dbReference>
<dbReference type="SUPFAM" id="SSF53448">
    <property type="entry name" value="Nucleotide-diphospho-sugar transferases"/>
    <property type="match status" value="1"/>
</dbReference>
<organism>
    <name type="scientific">Synechocystis sp. (strain ATCC 27184 / PCC 6803 / Kazusa)</name>
    <dbReference type="NCBI Taxonomy" id="1111708"/>
    <lineage>
        <taxon>Bacteria</taxon>
        <taxon>Bacillati</taxon>
        <taxon>Cyanobacteriota</taxon>
        <taxon>Cyanophyceae</taxon>
        <taxon>Synechococcales</taxon>
        <taxon>Merismopediaceae</taxon>
        <taxon>Synechocystis</taxon>
    </lineage>
</organism>
<feature type="chain" id="PRO_0000134926" description="Molybdenum cofactor biosynthesis bifunctional protein">
    <location>
        <begin position="1"/>
        <end position="347"/>
    </location>
</feature>
<feature type="region of interest" description="Molybdenum cofactor biosynthesis protein C">
    <location>
        <begin position="1"/>
        <end position="158"/>
    </location>
</feature>
<feature type="region of interest" description="Molybdenum cofactor guanylyltransferase">
    <location>
        <begin position="159"/>
        <end position="347"/>
    </location>
</feature>
<feature type="active site" description="For MoaC activity" evidence="3">
    <location>
        <position position="131"/>
    </location>
</feature>
<feature type="binding site" evidence="2">
    <location>
        <begin position="75"/>
        <end position="77"/>
    </location>
    <ligand>
        <name>substrate</name>
    </ligand>
</feature>
<feature type="binding site" evidence="2">
    <location>
        <begin position="116"/>
        <end position="117"/>
    </location>
    <ligand>
        <name>substrate</name>
    </ligand>
</feature>
<feature type="binding site" evidence="1">
    <location>
        <begin position="167"/>
        <end position="169"/>
    </location>
    <ligand>
        <name>GTP</name>
        <dbReference type="ChEBI" id="CHEBI:37565"/>
    </ligand>
</feature>
<feature type="binding site" evidence="1">
    <location>
        <position position="179"/>
    </location>
    <ligand>
        <name>GTP</name>
        <dbReference type="ChEBI" id="CHEBI:37565"/>
    </ligand>
</feature>
<feature type="binding site" evidence="1">
    <location>
        <position position="226"/>
    </location>
    <ligand>
        <name>GTP</name>
        <dbReference type="ChEBI" id="CHEBI:37565"/>
    </ligand>
</feature>
<feature type="binding site" evidence="1">
    <location>
        <position position="255"/>
    </location>
    <ligand>
        <name>GTP</name>
        <dbReference type="ChEBI" id="CHEBI:37565"/>
    </ligand>
</feature>
<feature type="binding site" evidence="1">
    <location>
        <position position="255"/>
    </location>
    <ligand>
        <name>Mg(2+)</name>
        <dbReference type="ChEBI" id="CHEBI:18420"/>
    </ligand>
</feature>
<comment type="function">
    <text evidence="2">Catalyzes the conversion of (8S)-3',8-cyclo-7,8-dihydroguanosine 5'-triphosphate to cyclic pyranopterin monophosphate (cPMP).</text>
</comment>
<comment type="function">
    <text evidence="1">Transfers a GMP moiety from GTP to Mo-molybdopterin (Mo-MPT) cofactor (Moco or molybdenum cofactor) to form Mo-molybdopterin guanine dinucleotide (Mo-MGD) cofactor.</text>
</comment>
<comment type="catalytic activity">
    <reaction>
        <text>Mo-molybdopterin + GTP + H(+) = Mo-molybdopterin guanine dinucleotide + diphosphate</text>
        <dbReference type="Rhea" id="RHEA:34243"/>
        <dbReference type="ChEBI" id="CHEBI:15378"/>
        <dbReference type="ChEBI" id="CHEBI:33019"/>
        <dbReference type="ChEBI" id="CHEBI:37565"/>
        <dbReference type="ChEBI" id="CHEBI:71302"/>
        <dbReference type="ChEBI" id="CHEBI:71310"/>
        <dbReference type="EC" id="2.7.7.77"/>
    </reaction>
</comment>
<comment type="catalytic activity">
    <reaction evidence="2">
        <text>(8S)-3',8-cyclo-7,8-dihydroguanosine 5'-triphosphate = cyclic pyranopterin phosphate + diphosphate</text>
        <dbReference type="Rhea" id="RHEA:49580"/>
        <dbReference type="ChEBI" id="CHEBI:33019"/>
        <dbReference type="ChEBI" id="CHEBI:59648"/>
        <dbReference type="ChEBI" id="CHEBI:131766"/>
        <dbReference type="EC" id="4.6.1.17"/>
    </reaction>
</comment>
<comment type="cofactor">
    <cofactor evidence="1">
        <name>Mg(2+)</name>
        <dbReference type="ChEBI" id="CHEBI:18420"/>
    </cofactor>
</comment>
<comment type="pathway">
    <text>Cofactor biosynthesis; molybdopterin biosynthesis.</text>
</comment>
<comment type="subcellular location">
    <subcellularLocation>
        <location evidence="1">Cytoplasm</location>
    </subcellularLocation>
</comment>
<comment type="domain">
    <text evidence="1">The N-terminal domain of the MobA region determines nucleotide recognition and specific binding, while its C-terminal domain determines the specific binding to the target protein.</text>
</comment>
<comment type="similarity">
    <text evidence="4">In the N-terminal section; belongs to the MoaC family.</text>
</comment>
<comment type="similarity">
    <text evidence="4">In the C-terminal section; belongs to the MobA family.</text>
</comment>
<sequence>MFTHLDENQQPRMVDISQKVAGDRRAVAQCIVQLPKAIKDYLTGQEIFLKKGPVIQTAIIAGTMAVKKTADLIPFCHTLPIHGCKFDINIVYQKRDYLEIFLQCAVNTNYKTGVEMEALCGVSVAALTIYDMCKSISSEIIIKNTKLIEKTGGKADVSQTPLYGLVLTGGKSRRMGKDKALINYQGQPHGQYIYDLLAKYCEQVFLSARPSQWQGTPLENLPTLVDRGESVGPMSGILTALQSYPGVNWLIIACDLAYINSTMVEKLIAQARQDLVATCYENADQGFPEALCGFYTPLALQLFTKAQNIGLHCPVKILQMADCQLIKPDNLFDIANINSPEDYGQIN</sequence>
<proteinExistence type="inferred from homology"/>
<name>MOCBA_SYNY3</name>